<keyword id="KW-0209">Deafness</keyword>
<keyword id="KW-0225">Disease variant</keyword>
<keyword id="KW-0931">ER-Golgi transport</keyword>
<keyword id="KW-0539">Nucleus</keyword>
<keyword id="KW-0597">Phosphoprotein</keyword>
<keyword id="KW-1267">Proteomics identification</keyword>
<keyword id="KW-1185">Reference proteome</keyword>
<keyword id="KW-0677">Repeat</keyword>
<keyword id="KW-0802">TPR repeat</keyword>
<keyword id="KW-0813">Transport</keyword>
<proteinExistence type="evidence at protein level"/>
<gene>
    <name evidence="12" type="primary">TRAPPC12</name>
    <name evidence="10" type="synonym">TRAMM</name>
    <name evidence="9" type="synonym">TTC15</name>
    <name evidence="8" type="ORF">CGI-87</name>
</gene>
<comment type="function">
    <text evidence="4 5 6">Component of the TRAPP complex, which is involved in endoplasmic reticulum to Golgi apparatus trafficking at a very early stage (PubMed:21525244, PubMed:28777934). Also plays a role in chromosome congression, kinetochore assembly and stability and controls the recruitment of CENPE to the kinetochores (PubMed:25918224).</text>
</comment>
<comment type="subunit">
    <text evidence="4 5">Component of the multisubunit TRAPP (transport protein particle) complex, which includes at least TRAPPC2, TRAPPC2L, TRAPPC3, TRAPPC3L, TRAPPC4, TRAPPC5, TRAPPC8, TRAPPC9, TRAPPC10, TRAPPC11 and TRAPPC12 (PubMed:21525244). Interacts with CENPE (PubMed:25918224).</text>
</comment>
<comment type="interaction">
    <interactant intactId="EBI-2819919">
        <id>Q8WVT3</id>
    </interactant>
    <interactant intactId="EBI-11991546">
        <id>O00327-8</id>
        <label>BMAL1</label>
    </interactant>
    <organismsDiffer>false</organismsDiffer>
    <experiments>3</experiments>
</comment>
<comment type="interaction">
    <interactant intactId="EBI-2819919">
        <id>Q8WVT3</id>
    </interactant>
    <interactant intactId="EBI-1642515">
        <id>I6L957</id>
        <label>HNRNPA2B1</label>
    </interactant>
    <organismsDiffer>false</organismsDiffer>
    <experiments>3</experiments>
</comment>
<comment type="interaction">
    <interactant intactId="EBI-2819919">
        <id>Q8WVT3</id>
    </interactant>
    <interactant intactId="EBI-821335">
        <id>Q9HAP6</id>
        <label>LIN7B</label>
    </interactant>
    <organismsDiffer>false</organismsDiffer>
    <experiments>3</experiments>
</comment>
<comment type="interaction">
    <interactant intactId="EBI-2819919">
        <id>Q8WVT3</id>
    </interactant>
    <interactant intactId="EBI-1054572">
        <id>Q96LW2</id>
        <label>RSKR</label>
    </interactant>
    <organismsDiffer>false</organismsDiffer>
    <experiments>3</experiments>
</comment>
<comment type="subcellular location">
    <subcellularLocation>
        <location evidence="4">Endoplasmic reticulum-Golgi intermediate compartment</location>
    </subcellularLocation>
    <subcellularLocation>
        <location evidence="5">Nucleus</location>
    </subcellularLocation>
    <text evidence="5">Mainly localizes to structures resembling the Golgi and a small amount is found in the nucleus.</text>
</comment>
<comment type="PTM">
    <text evidence="5">Phosphorylated as the cells enter mitosis but is dephosphorylated at or before the onset of anaphase. The phosphorylated form recruits CENPE to kinetochores more efficiently than the non-phosphorylated form.</text>
</comment>
<comment type="disease" evidence="6">
    <disease id="DI-05100">
        <name>Encephalopathy, progressive, early-onset, with brain atrophy and spasticity</name>
        <acronym>PEBAS</acronym>
        <description>An autosomal recessive, progressive encephalopathy characterized by central nervous system atrophy and dysfunction, spasticity, microcephaly, global developmental delay, and hearing loss.</description>
        <dbReference type="MIM" id="617669"/>
    </disease>
    <text evidence="6">The disease is caused by variants affecting the gene represented in this entry. Cells display a fragmented Golgi apparatus (PubMed:28777934).</text>
</comment>
<comment type="sequence caution" evidence="11">
    <conflict type="erroneous initiation">
        <sequence resource="EMBL-CDS" id="AAD34082"/>
    </conflict>
    <text>Truncated N-terminus.</text>
</comment>
<accession>Q8WVT3</accession>
<accession>B3KV01</accession>
<accession>D6W4Y2</accession>
<accession>Q8WVW1</accession>
<accession>Q9Y395</accession>
<name>TPC12_HUMAN</name>
<feature type="chain" id="PRO_0000106401" description="Trafficking protein particle complex subunit 12">
    <location>
        <begin position="1"/>
        <end position="735"/>
    </location>
</feature>
<feature type="repeat" description="TPR 1">
    <location>
        <begin position="545"/>
        <end position="578"/>
    </location>
</feature>
<feature type="repeat" description="TPR 2">
    <location>
        <begin position="580"/>
        <end position="613"/>
    </location>
</feature>
<feature type="repeat" description="TPR 3">
    <location>
        <begin position="620"/>
        <end position="653"/>
    </location>
</feature>
<feature type="repeat" description="TPR 4">
    <location>
        <begin position="654"/>
        <end position="687"/>
    </location>
</feature>
<feature type="region of interest" description="Disordered" evidence="2">
    <location>
        <begin position="1"/>
        <end position="204"/>
    </location>
</feature>
<feature type="region of interest" description="Disordered" evidence="2">
    <location>
        <begin position="237"/>
        <end position="276"/>
    </location>
</feature>
<feature type="compositionally biased region" description="Pro residues" evidence="2">
    <location>
        <begin position="13"/>
        <end position="22"/>
    </location>
</feature>
<feature type="compositionally biased region" description="Acidic residues" evidence="2">
    <location>
        <begin position="34"/>
        <end position="50"/>
    </location>
</feature>
<feature type="modified residue" description="Phosphoserine" evidence="1">
    <location>
        <position position="109"/>
    </location>
</feature>
<feature type="modified residue" description="Phosphoserine" evidence="13 14 15 16">
    <location>
        <position position="184"/>
    </location>
</feature>
<feature type="sequence variant" id="VAR_028442" description="In dbSNP:rs11686212." evidence="7">
    <original>S</original>
    <variation>G</variation>
    <location>
        <position position="301"/>
    </location>
</feature>
<feature type="sequence variant" id="VAR_080390" description="In PEBAS; uncertain significance; dbSNP:rs768950892." evidence="6">
    <original>A</original>
    <variation>V</variation>
    <location>
        <position position="627"/>
    </location>
</feature>
<feature type="sequence variant" id="VAR_035869" description="In a breast cancer sample; somatic mutation." evidence="3">
    <original>E</original>
    <variation>Q</variation>
    <location>
        <position position="717"/>
    </location>
</feature>
<feature type="sequence conflict" description="In Ref. 4; AAD34082." evidence="11" ref="4">
    <original>F</original>
    <variation>V</variation>
    <location>
        <position position="451"/>
    </location>
</feature>
<feature type="sequence conflict" description="In Ref. 4; AAD34082." evidence="11" ref="4">
    <original>E</original>
    <variation>D</variation>
    <location>
        <position position="486"/>
    </location>
</feature>
<feature type="sequence conflict" description="In Ref. 3; AAH14164." evidence="11" ref="3">
    <original>E</original>
    <variation>D</variation>
    <location>
        <position position="566"/>
    </location>
</feature>
<reference key="1">
    <citation type="journal article" date="2004" name="Nat. Genet.">
        <title>Complete sequencing and characterization of 21,243 full-length human cDNAs.</title>
        <authorList>
            <person name="Ota T."/>
            <person name="Suzuki Y."/>
            <person name="Nishikawa T."/>
            <person name="Otsuki T."/>
            <person name="Sugiyama T."/>
            <person name="Irie R."/>
            <person name="Wakamatsu A."/>
            <person name="Hayashi K."/>
            <person name="Sato H."/>
            <person name="Nagai K."/>
            <person name="Kimura K."/>
            <person name="Makita H."/>
            <person name="Sekine M."/>
            <person name="Obayashi M."/>
            <person name="Nishi T."/>
            <person name="Shibahara T."/>
            <person name="Tanaka T."/>
            <person name="Ishii S."/>
            <person name="Yamamoto J."/>
            <person name="Saito K."/>
            <person name="Kawai Y."/>
            <person name="Isono Y."/>
            <person name="Nakamura Y."/>
            <person name="Nagahari K."/>
            <person name="Murakami K."/>
            <person name="Yasuda T."/>
            <person name="Iwayanagi T."/>
            <person name="Wagatsuma M."/>
            <person name="Shiratori A."/>
            <person name="Sudo H."/>
            <person name="Hosoiri T."/>
            <person name="Kaku Y."/>
            <person name="Kodaira H."/>
            <person name="Kondo H."/>
            <person name="Sugawara M."/>
            <person name="Takahashi M."/>
            <person name="Kanda K."/>
            <person name="Yokoi T."/>
            <person name="Furuya T."/>
            <person name="Kikkawa E."/>
            <person name="Omura Y."/>
            <person name="Abe K."/>
            <person name="Kamihara K."/>
            <person name="Katsuta N."/>
            <person name="Sato K."/>
            <person name="Tanikawa M."/>
            <person name="Yamazaki M."/>
            <person name="Ninomiya K."/>
            <person name="Ishibashi T."/>
            <person name="Yamashita H."/>
            <person name="Murakawa K."/>
            <person name="Fujimori K."/>
            <person name="Tanai H."/>
            <person name="Kimata M."/>
            <person name="Watanabe M."/>
            <person name="Hiraoka S."/>
            <person name="Chiba Y."/>
            <person name="Ishida S."/>
            <person name="Ono Y."/>
            <person name="Takiguchi S."/>
            <person name="Watanabe S."/>
            <person name="Yosida M."/>
            <person name="Hotuta T."/>
            <person name="Kusano J."/>
            <person name="Kanehori K."/>
            <person name="Takahashi-Fujii A."/>
            <person name="Hara H."/>
            <person name="Tanase T.-O."/>
            <person name="Nomura Y."/>
            <person name="Togiya S."/>
            <person name="Komai F."/>
            <person name="Hara R."/>
            <person name="Takeuchi K."/>
            <person name="Arita M."/>
            <person name="Imose N."/>
            <person name="Musashino K."/>
            <person name="Yuuki H."/>
            <person name="Oshima A."/>
            <person name="Sasaki N."/>
            <person name="Aotsuka S."/>
            <person name="Yoshikawa Y."/>
            <person name="Matsunawa H."/>
            <person name="Ichihara T."/>
            <person name="Shiohata N."/>
            <person name="Sano S."/>
            <person name="Moriya S."/>
            <person name="Momiyama H."/>
            <person name="Satoh N."/>
            <person name="Takami S."/>
            <person name="Terashima Y."/>
            <person name="Suzuki O."/>
            <person name="Nakagawa S."/>
            <person name="Senoh A."/>
            <person name="Mizoguchi H."/>
            <person name="Goto Y."/>
            <person name="Shimizu F."/>
            <person name="Wakebe H."/>
            <person name="Hishigaki H."/>
            <person name="Watanabe T."/>
            <person name="Sugiyama A."/>
            <person name="Takemoto M."/>
            <person name="Kawakami B."/>
            <person name="Yamazaki M."/>
            <person name="Watanabe K."/>
            <person name="Kumagai A."/>
            <person name="Itakura S."/>
            <person name="Fukuzumi Y."/>
            <person name="Fujimori Y."/>
            <person name="Komiyama M."/>
            <person name="Tashiro H."/>
            <person name="Tanigami A."/>
            <person name="Fujiwara T."/>
            <person name="Ono T."/>
            <person name="Yamada K."/>
            <person name="Fujii Y."/>
            <person name="Ozaki K."/>
            <person name="Hirao M."/>
            <person name="Ohmori Y."/>
            <person name="Kawabata A."/>
            <person name="Hikiji T."/>
            <person name="Kobatake N."/>
            <person name="Inagaki H."/>
            <person name="Ikema Y."/>
            <person name="Okamoto S."/>
            <person name="Okitani R."/>
            <person name="Kawakami T."/>
            <person name="Noguchi S."/>
            <person name="Itoh T."/>
            <person name="Shigeta K."/>
            <person name="Senba T."/>
            <person name="Matsumura K."/>
            <person name="Nakajima Y."/>
            <person name="Mizuno T."/>
            <person name="Morinaga M."/>
            <person name="Sasaki M."/>
            <person name="Togashi T."/>
            <person name="Oyama M."/>
            <person name="Hata H."/>
            <person name="Watanabe M."/>
            <person name="Komatsu T."/>
            <person name="Mizushima-Sugano J."/>
            <person name="Satoh T."/>
            <person name="Shirai Y."/>
            <person name="Takahashi Y."/>
            <person name="Nakagawa K."/>
            <person name="Okumura K."/>
            <person name="Nagase T."/>
            <person name="Nomura N."/>
            <person name="Kikuchi H."/>
            <person name="Masuho Y."/>
            <person name="Yamashita R."/>
            <person name="Nakai K."/>
            <person name="Yada T."/>
            <person name="Nakamura Y."/>
            <person name="Ohara O."/>
            <person name="Isogai T."/>
            <person name="Sugano S."/>
        </authorList>
    </citation>
    <scope>NUCLEOTIDE SEQUENCE [LARGE SCALE MRNA]</scope>
    <source>
        <tissue>Uterus</tissue>
    </source>
</reference>
<reference key="2">
    <citation type="submission" date="2005-09" db="EMBL/GenBank/DDBJ databases">
        <authorList>
            <person name="Mural R.J."/>
            <person name="Istrail S."/>
            <person name="Sutton G.G."/>
            <person name="Florea L."/>
            <person name="Halpern A.L."/>
            <person name="Mobarry C.M."/>
            <person name="Lippert R."/>
            <person name="Walenz B."/>
            <person name="Shatkay H."/>
            <person name="Dew I."/>
            <person name="Miller J.R."/>
            <person name="Flanigan M.J."/>
            <person name="Edwards N.J."/>
            <person name="Bolanos R."/>
            <person name="Fasulo D."/>
            <person name="Halldorsson B.V."/>
            <person name="Hannenhalli S."/>
            <person name="Turner R."/>
            <person name="Yooseph S."/>
            <person name="Lu F."/>
            <person name="Nusskern D.R."/>
            <person name="Shue B.C."/>
            <person name="Zheng X.H."/>
            <person name="Zhong F."/>
            <person name="Delcher A.L."/>
            <person name="Huson D.H."/>
            <person name="Kravitz S.A."/>
            <person name="Mouchard L."/>
            <person name="Reinert K."/>
            <person name="Remington K.A."/>
            <person name="Clark A.G."/>
            <person name="Waterman M.S."/>
            <person name="Eichler E.E."/>
            <person name="Adams M.D."/>
            <person name="Hunkapiller M.W."/>
            <person name="Myers E.W."/>
            <person name="Venter J.C."/>
        </authorList>
    </citation>
    <scope>NUCLEOTIDE SEQUENCE [LARGE SCALE GENOMIC DNA]</scope>
    <scope>VARIANT GLY-301</scope>
</reference>
<reference key="3">
    <citation type="journal article" date="2004" name="Genome Res.">
        <title>The status, quality, and expansion of the NIH full-length cDNA project: the Mammalian Gene Collection (MGC).</title>
        <authorList>
            <consortium name="The MGC Project Team"/>
        </authorList>
    </citation>
    <scope>NUCLEOTIDE SEQUENCE [LARGE SCALE MRNA]</scope>
    <source>
        <tissue>Lung</tissue>
        <tissue>Muscle</tissue>
    </source>
</reference>
<reference key="4">
    <citation type="journal article" date="2000" name="Genome Res.">
        <title>Identification of novel human genes evolutionarily conserved in Caenorhabditis elegans by comparative proteomics.</title>
        <authorList>
            <person name="Lai C.-H."/>
            <person name="Chou C.-Y."/>
            <person name="Ch'ang L.-Y."/>
            <person name="Liu C.-S."/>
            <person name="Lin W.-C."/>
        </authorList>
    </citation>
    <scope>NUCLEOTIDE SEQUENCE [LARGE SCALE MRNA] OF 356-735</scope>
</reference>
<reference key="5">
    <citation type="journal article" date="2008" name="Proc. Natl. Acad. Sci. U.S.A.">
        <title>A quantitative atlas of mitotic phosphorylation.</title>
        <authorList>
            <person name="Dephoure N."/>
            <person name="Zhou C."/>
            <person name="Villen J."/>
            <person name="Beausoleil S.A."/>
            <person name="Bakalarski C.E."/>
            <person name="Elledge S.J."/>
            <person name="Gygi S.P."/>
        </authorList>
    </citation>
    <scope>PHOSPHORYLATION [LARGE SCALE ANALYSIS] AT SER-184</scope>
    <scope>IDENTIFICATION BY MASS SPECTROMETRY [LARGE SCALE ANALYSIS]</scope>
    <source>
        <tissue>Cervix carcinoma</tissue>
    </source>
</reference>
<reference key="6">
    <citation type="journal article" date="2009" name="Anal. Chem.">
        <title>Lys-N and trypsin cover complementary parts of the phosphoproteome in a refined SCX-based approach.</title>
        <authorList>
            <person name="Gauci S."/>
            <person name="Helbig A.O."/>
            <person name="Slijper M."/>
            <person name="Krijgsveld J."/>
            <person name="Heck A.J."/>
            <person name="Mohammed S."/>
        </authorList>
    </citation>
    <scope>IDENTIFICATION BY MASS SPECTROMETRY [LARGE SCALE ANALYSIS]</scope>
</reference>
<reference key="7">
    <citation type="journal article" date="2009" name="Sci. Signal.">
        <title>Quantitative phosphoproteomic analysis of T cell receptor signaling reveals system-wide modulation of protein-protein interactions.</title>
        <authorList>
            <person name="Mayya V."/>
            <person name="Lundgren D.H."/>
            <person name="Hwang S.-I."/>
            <person name="Rezaul K."/>
            <person name="Wu L."/>
            <person name="Eng J.K."/>
            <person name="Rodionov V."/>
            <person name="Han D.K."/>
        </authorList>
    </citation>
    <scope>PHOSPHORYLATION [LARGE SCALE ANALYSIS] AT SER-184</scope>
    <scope>IDENTIFICATION BY MASS SPECTROMETRY [LARGE SCALE ANALYSIS]</scope>
    <source>
        <tissue>Leukemic T-cell</tissue>
    </source>
</reference>
<reference key="8">
    <citation type="journal article" date="2011" name="Mol. Biol. Cell">
        <title>C4orf41 and TTC-15 are mammalian TRAPP components with a role at an early stage in ER-to-Golgi trafficking.</title>
        <authorList>
            <person name="Scrivens P.J."/>
            <person name="Noueihed B."/>
            <person name="Shahrzad N."/>
            <person name="Hul S."/>
            <person name="Brunet S."/>
            <person name="Sacher M."/>
        </authorList>
    </citation>
    <scope>FUNCTION</scope>
    <scope>IDENTIFICATION IN TRAPP COMPLEX</scope>
    <scope>SUBCELLULAR LOCATION</scope>
</reference>
<reference key="9">
    <citation type="journal article" date="2011" name="Sci. Signal.">
        <title>System-wide temporal characterization of the proteome and phosphoproteome of human embryonic stem cell differentiation.</title>
        <authorList>
            <person name="Rigbolt K.T."/>
            <person name="Prokhorova T.A."/>
            <person name="Akimov V."/>
            <person name="Henningsen J."/>
            <person name="Johansen P.T."/>
            <person name="Kratchmarova I."/>
            <person name="Kassem M."/>
            <person name="Mann M."/>
            <person name="Olsen J.V."/>
            <person name="Blagoev B."/>
        </authorList>
    </citation>
    <scope>PHOSPHORYLATION [LARGE SCALE ANALYSIS] AT SER-184</scope>
    <scope>IDENTIFICATION BY MASS SPECTROMETRY [LARGE SCALE ANALYSIS]</scope>
</reference>
<reference key="10">
    <citation type="journal article" date="2013" name="J. Proteome Res.">
        <title>Toward a comprehensive characterization of a human cancer cell phosphoproteome.</title>
        <authorList>
            <person name="Zhou H."/>
            <person name="Di Palma S."/>
            <person name="Preisinger C."/>
            <person name="Peng M."/>
            <person name="Polat A.N."/>
            <person name="Heck A.J."/>
            <person name="Mohammed S."/>
        </authorList>
    </citation>
    <scope>PHOSPHORYLATION [LARGE SCALE ANALYSIS] AT SER-184</scope>
    <scope>IDENTIFICATION BY MASS SPECTROMETRY [LARGE SCALE ANALYSIS]</scope>
    <source>
        <tissue>Cervix carcinoma</tissue>
        <tissue>Erythroleukemia</tissue>
    </source>
</reference>
<reference key="11">
    <citation type="journal article" date="2014" name="J. Proteomics">
        <title>An enzyme assisted RP-RPLC approach for in-depth analysis of human liver phosphoproteome.</title>
        <authorList>
            <person name="Bian Y."/>
            <person name="Song C."/>
            <person name="Cheng K."/>
            <person name="Dong M."/>
            <person name="Wang F."/>
            <person name="Huang J."/>
            <person name="Sun D."/>
            <person name="Wang L."/>
            <person name="Ye M."/>
            <person name="Zou H."/>
        </authorList>
    </citation>
    <scope>IDENTIFICATION BY MASS SPECTROMETRY [LARGE SCALE ANALYSIS]</scope>
    <source>
        <tissue>Liver</tissue>
    </source>
</reference>
<reference key="12">
    <citation type="journal article" date="2015" name="J. Cell Biol.">
        <title>TRAMM/TrappC12 plays a role in chromosome congression, kinetochore stability, and CENP-E recruitment.</title>
        <authorList>
            <person name="Milev M.P."/>
            <person name="Hasaj B."/>
            <person name="Saint-Dic D."/>
            <person name="Snounou S."/>
            <person name="Zhao Q."/>
            <person name="Sacher M."/>
        </authorList>
    </citation>
    <scope>FUNCTION</scope>
    <scope>SUBCELLULAR LOCATION</scope>
    <scope>INTERACTION WITH CENPE</scope>
    <scope>PHOSPHORYLATION</scope>
</reference>
<reference key="13">
    <citation type="journal article" date="2006" name="Science">
        <title>The consensus coding sequences of human breast and colorectal cancers.</title>
        <authorList>
            <person name="Sjoeblom T."/>
            <person name="Jones S."/>
            <person name="Wood L.D."/>
            <person name="Parsons D.W."/>
            <person name="Lin J."/>
            <person name="Barber T.D."/>
            <person name="Mandelker D."/>
            <person name="Leary R.J."/>
            <person name="Ptak J."/>
            <person name="Silliman N."/>
            <person name="Szabo S."/>
            <person name="Buckhaults P."/>
            <person name="Farrell C."/>
            <person name="Meeh P."/>
            <person name="Markowitz S.D."/>
            <person name="Willis J."/>
            <person name="Dawson D."/>
            <person name="Willson J.K.V."/>
            <person name="Gazdar A.F."/>
            <person name="Hartigan J."/>
            <person name="Wu L."/>
            <person name="Liu C."/>
            <person name="Parmigiani G."/>
            <person name="Park B.H."/>
            <person name="Bachman K.E."/>
            <person name="Papadopoulos N."/>
            <person name="Vogelstein B."/>
            <person name="Kinzler K.W."/>
            <person name="Velculescu V.E."/>
        </authorList>
    </citation>
    <scope>VARIANT [LARGE SCALE ANALYSIS] GLN-717</scope>
</reference>
<reference key="14">
    <citation type="journal article" date="2017" name="Am. J. Hum. Genet.">
        <title>Mutations in TRAPPC12 manifest in progressive childhood encephalopathy and Golgi dysfunction.</title>
        <authorList>
            <person name="Milev M.P."/>
            <person name="Grout M.E."/>
            <person name="Saint-Dic D."/>
            <person name="Cheng Y.H."/>
            <person name="Glass I.A."/>
            <person name="Hale C.J."/>
            <person name="Hanna D.S."/>
            <person name="Dorschner M.O."/>
            <person name="Prematilake K."/>
            <person name="Shaag A."/>
            <person name="Elpeleg O."/>
            <person name="Sacher M."/>
            <person name="Doherty D."/>
            <person name="Edvardson S."/>
        </authorList>
    </citation>
    <scope>INVOLVEMENT IN PEBAS</scope>
    <scope>VARIANT PEBAS VAL-627</scope>
</reference>
<protein>
    <recommendedName>
        <fullName evidence="11">Trafficking protein particle complex subunit 12</fullName>
    </recommendedName>
    <alternativeName>
        <fullName evidence="9">Tetratricopeptide repeat protein 15</fullName>
        <shortName evidence="9">TPR repeat protein 15</shortName>
        <shortName evidence="9">TTC-15</shortName>
    </alternativeName>
    <alternativeName>
        <fullName evidence="10">Trafficking of membranes and mitosis</fullName>
    </alternativeName>
</protein>
<sequence>MEDAGGGEETPAPEAPHPPQLAPPEEQGLLFQEETIDLGGDEFGSEENETASEGSSPLADKLNEHMMESVLISDSPNSEGDAGDLGRVRDEAEPGGEGDPGPEPAGTPSPSGEADGDCAPEDAAPSSGGAPRQDAAREVPGSEAARPEQEPPVAEPVPVCTIFSQRAPPASGDGFEPQMVKSPSFGGASEASARTPPQVVQPSPSLSTFFGDTAASHSLASDFFDSFTTSAFISVSNPGAGSPAPASPPPLAVPGTEGRPEPVAMRGPQAAAPPASPEPFAHIQAVFAGSDDPFATALSMSEMDRRNDAWLPGEATRGVLRAVATQQRGAVFVDKENLTMPGLRFDNIQGDAVKDLMLRFLGEKAAAKRQVLNADSVEQSFVGLKQLISCRNWRAAVDLCGRLLTAHGQGYGKSGLLTSHTTDSLQLWFVRLALLVKLGLFQNAEMEFEPFGNLDQPDLYYEYYPHVYPGRRGSMVPFSMRILHAELQQYLGNPQESLDRLHKVKTVCSKILANLEQGLAEDGGMSSVTQEGRQASIRLWRSRLGRVMYSMANCLLLMKDYVLAVEAYHSVIKYYPEQEPQLLSGIGRISLQIGDIKTAEKYFQDVEKVTQKLDGLQGKIMVLMNSAFLHLGQNNFAEAHRFFTEILRMDPRNAVANNNAAVCLLYLGKLKDSLRQLEAMVQQDPRHYLHESVLFNLTTMYELESSRSMQKKQALLEAVAGKEGDSFNTQCLKLA</sequence>
<dbReference type="EMBL" id="AK098327">
    <property type="protein sequence ID" value="BAG53613.1"/>
    <property type="molecule type" value="mRNA"/>
</dbReference>
<dbReference type="EMBL" id="CH471053">
    <property type="protein sequence ID" value="EAX01067.1"/>
    <property type="molecule type" value="Genomic_DNA"/>
</dbReference>
<dbReference type="EMBL" id="CH471053">
    <property type="protein sequence ID" value="EAX01068.1"/>
    <property type="molecule type" value="Genomic_DNA"/>
</dbReference>
<dbReference type="EMBL" id="BC014164">
    <property type="protein sequence ID" value="AAH14164.2"/>
    <property type="molecule type" value="mRNA"/>
</dbReference>
<dbReference type="EMBL" id="BC017475">
    <property type="protein sequence ID" value="AAH17475.2"/>
    <property type="molecule type" value="mRNA"/>
</dbReference>
<dbReference type="EMBL" id="AF151845">
    <property type="protein sequence ID" value="AAD34082.1"/>
    <property type="status" value="ALT_INIT"/>
    <property type="molecule type" value="mRNA"/>
</dbReference>
<dbReference type="CCDS" id="CCDS1652.1"/>
<dbReference type="RefSeq" id="NP_001308031.1">
    <property type="nucleotide sequence ID" value="NM_001321102.2"/>
</dbReference>
<dbReference type="RefSeq" id="NP_057114.5">
    <property type="nucleotide sequence ID" value="NM_016030.5"/>
</dbReference>
<dbReference type="SMR" id="Q8WVT3"/>
<dbReference type="BioGRID" id="119301">
    <property type="interactions" value="101"/>
</dbReference>
<dbReference type="ComplexPortal" id="CPX-4750">
    <property type="entry name" value="TRAPP III complex, TRAPPC2 variant"/>
</dbReference>
<dbReference type="ComplexPortal" id="CPX-6903">
    <property type="entry name" value="TRAPP III complex, TRAPPC2B variant"/>
</dbReference>
<dbReference type="CORUM" id="Q8WVT3"/>
<dbReference type="DIP" id="DIP-48283N"/>
<dbReference type="FunCoup" id="Q8WVT3">
    <property type="interactions" value="3456"/>
</dbReference>
<dbReference type="IntAct" id="Q8WVT3">
    <property type="interactions" value="36"/>
</dbReference>
<dbReference type="STRING" id="9606.ENSP00000324318"/>
<dbReference type="GlyGen" id="Q8WVT3">
    <property type="glycosylation" value="2 sites, 1 O-linked glycan (1 site)"/>
</dbReference>
<dbReference type="iPTMnet" id="Q8WVT3"/>
<dbReference type="MetOSite" id="Q8WVT3"/>
<dbReference type="PhosphoSitePlus" id="Q8WVT3"/>
<dbReference type="BioMuta" id="TRAPPC12"/>
<dbReference type="DMDM" id="116242834"/>
<dbReference type="jPOST" id="Q8WVT3"/>
<dbReference type="MassIVE" id="Q8WVT3"/>
<dbReference type="PaxDb" id="9606-ENSP00000324318"/>
<dbReference type="PeptideAtlas" id="Q8WVT3"/>
<dbReference type="ProteomicsDB" id="74819"/>
<dbReference type="Pumba" id="Q8WVT3"/>
<dbReference type="Antibodypedia" id="26298">
    <property type="antibodies" value="69 antibodies from 14 providers"/>
</dbReference>
<dbReference type="DNASU" id="51112"/>
<dbReference type="Ensembl" id="ENST00000324266.10">
    <property type="protein sequence ID" value="ENSP00000324318.5"/>
    <property type="gene ID" value="ENSG00000171853.16"/>
</dbReference>
<dbReference type="Ensembl" id="ENST00000382110.6">
    <property type="protein sequence ID" value="ENSP00000371544.2"/>
    <property type="gene ID" value="ENSG00000171853.16"/>
</dbReference>
<dbReference type="GeneID" id="51112"/>
<dbReference type="KEGG" id="hsa:51112"/>
<dbReference type="MANE-Select" id="ENST00000324266.10">
    <property type="protein sequence ID" value="ENSP00000324318.5"/>
    <property type="RefSeq nucleotide sequence ID" value="NM_016030.6"/>
    <property type="RefSeq protein sequence ID" value="NP_057114.5"/>
</dbReference>
<dbReference type="UCSC" id="uc002qxm.2">
    <property type="organism name" value="human"/>
</dbReference>
<dbReference type="AGR" id="HGNC:24284"/>
<dbReference type="CTD" id="51112"/>
<dbReference type="DisGeNET" id="51112"/>
<dbReference type="GeneCards" id="TRAPPC12"/>
<dbReference type="HGNC" id="HGNC:24284">
    <property type="gene designation" value="TRAPPC12"/>
</dbReference>
<dbReference type="HPA" id="ENSG00000171853">
    <property type="expression patterns" value="Tissue enhanced (testis)"/>
</dbReference>
<dbReference type="MalaCards" id="TRAPPC12"/>
<dbReference type="MIM" id="614139">
    <property type="type" value="gene"/>
</dbReference>
<dbReference type="MIM" id="617669">
    <property type="type" value="phenotype"/>
</dbReference>
<dbReference type="neXtProt" id="NX_Q8WVT3"/>
<dbReference type="OpenTargets" id="ENSG00000171853"/>
<dbReference type="Orphanet" id="500144">
    <property type="disease" value="Early-onset progressive encephalopathy-hearing loss-pons hypoplasia-brain atrophy syndrome"/>
</dbReference>
<dbReference type="PharmGKB" id="PA134944710"/>
<dbReference type="VEuPathDB" id="HostDB:ENSG00000171853"/>
<dbReference type="eggNOG" id="KOG2796">
    <property type="taxonomic scope" value="Eukaryota"/>
</dbReference>
<dbReference type="GeneTree" id="ENSGT00390000002448"/>
<dbReference type="HOGENOM" id="CLU_014917_0_0_1"/>
<dbReference type="InParanoid" id="Q8WVT3"/>
<dbReference type="OMA" id="MSNITQE"/>
<dbReference type="OrthoDB" id="428342at2759"/>
<dbReference type="PAN-GO" id="Q8WVT3">
    <property type="GO annotations" value="2 GO annotations based on evolutionary models"/>
</dbReference>
<dbReference type="PhylomeDB" id="Q8WVT3"/>
<dbReference type="TreeFam" id="TF320881"/>
<dbReference type="PathwayCommons" id="Q8WVT3"/>
<dbReference type="Reactome" id="R-HSA-8876198">
    <property type="pathway name" value="RAB GEFs exchange GTP for GDP on RABs"/>
</dbReference>
<dbReference type="SignaLink" id="Q8WVT3"/>
<dbReference type="BioGRID-ORCS" id="51112">
    <property type="hits" value="35 hits in 1153 CRISPR screens"/>
</dbReference>
<dbReference type="ChiTaRS" id="TRAPPC12">
    <property type="organism name" value="human"/>
</dbReference>
<dbReference type="GenomeRNAi" id="51112"/>
<dbReference type="Pharos" id="Q8WVT3">
    <property type="development level" value="Tbio"/>
</dbReference>
<dbReference type="PRO" id="PR:Q8WVT3"/>
<dbReference type="Proteomes" id="UP000005640">
    <property type="component" value="Chromosome 2"/>
</dbReference>
<dbReference type="RNAct" id="Q8WVT3">
    <property type="molecule type" value="protein"/>
</dbReference>
<dbReference type="Bgee" id="ENSG00000171853">
    <property type="expression patterns" value="Expressed in left testis and 95 other cell types or tissues"/>
</dbReference>
<dbReference type="ExpressionAtlas" id="Q8WVT3">
    <property type="expression patterns" value="baseline and differential"/>
</dbReference>
<dbReference type="GO" id="GO:0005737">
    <property type="term" value="C:cytoplasm"/>
    <property type="evidence" value="ECO:0000303"/>
    <property type="project" value="ComplexPortal"/>
</dbReference>
<dbReference type="GO" id="GO:0005829">
    <property type="term" value="C:cytosol"/>
    <property type="evidence" value="ECO:0000304"/>
    <property type="project" value="Reactome"/>
</dbReference>
<dbReference type="GO" id="GO:0005793">
    <property type="term" value="C:endoplasmic reticulum-Golgi intermediate compartment"/>
    <property type="evidence" value="ECO:0007669"/>
    <property type="project" value="UniProtKB-SubCell"/>
</dbReference>
<dbReference type="GO" id="GO:0005794">
    <property type="term" value="C:Golgi apparatus"/>
    <property type="evidence" value="ECO:0000314"/>
    <property type="project" value="HPA"/>
</dbReference>
<dbReference type="GO" id="GO:0000776">
    <property type="term" value="C:kinetochore"/>
    <property type="evidence" value="ECO:0000314"/>
    <property type="project" value="UniProtKB"/>
</dbReference>
<dbReference type="GO" id="GO:0005654">
    <property type="term" value="C:nucleoplasm"/>
    <property type="evidence" value="ECO:0000314"/>
    <property type="project" value="HPA"/>
</dbReference>
<dbReference type="GO" id="GO:0005634">
    <property type="term" value="C:nucleus"/>
    <property type="evidence" value="ECO:0000314"/>
    <property type="project" value="UniProtKB"/>
</dbReference>
<dbReference type="GO" id="GO:0030008">
    <property type="term" value="C:TRAPP complex"/>
    <property type="evidence" value="ECO:0000314"/>
    <property type="project" value="UniProtKB"/>
</dbReference>
<dbReference type="GO" id="GO:1990072">
    <property type="term" value="C:TRAPPIII protein complex"/>
    <property type="evidence" value="ECO:0000303"/>
    <property type="project" value="ComplexPortal"/>
</dbReference>
<dbReference type="GO" id="GO:0048208">
    <property type="term" value="P:COPII vesicle coating"/>
    <property type="evidence" value="ECO:0000303"/>
    <property type="project" value="ComplexPortal"/>
</dbReference>
<dbReference type="GO" id="GO:0006888">
    <property type="term" value="P:endoplasmic reticulum to Golgi vesicle-mediated transport"/>
    <property type="evidence" value="ECO:0000315"/>
    <property type="project" value="UniProtKB"/>
</dbReference>
<dbReference type="GO" id="GO:0007030">
    <property type="term" value="P:Golgi organization"/>
    <property type="evidence" value="ECO:0000315"/>
    <property type="project" value="UniProtKB"/>
</dbReference>
<dbReference type="GO" id="GO:0051310">
    <property type="term" value="P:metaphase chromosome alignment"/>
    <property type="evidence" value="ECO:0000315"/>
    <property type="project" value="UniProtKB"/>
</dbReference>
<dbReference type="GO" id="GO:1905342">
    <property type="term" value="P:positive regulation of protein localization to kinetochore"/>
    <property type="evidence" value="ECO:0000315"/>
    <property type="project" value="UniProtKB"/>
</dbReference>
<dbReference type="GO" id="GO:0090234">
    <property type="term" value="P:regulation of kinetochore assembly"/>
    <property type="evidence" value="ECO:0000315"/>
    <property type="project" value="UniProtKB"/>
</dbReference>
<dbReference type="GO" id="GO:0099022">
    <property type="term" value="P:vesicle tethering"/>
    <property type="evidence" value="ECO:0000303"/>
    <property type="project" value="ComplexPortal"/>
</dbReference>
<dbReference type="FunFam" id="1.25.40.10:FF:000170">
    <property type="entry name" value="Trafficking protein particle complex subunit 12"/>
    <property type="match status" value="1"/>
</dbReference>
<dbReference type="Gene3D" id="1.25.40.10">
    <property type="entry name" value="Tetratricopeptide repeat domain"/>
    <property type="match status" value="1"/>
</dbReference>
<dbReference type="InterPro" id="IPR011990">
    <property type="entry name" value="TPR-like_helical_dom_sf"/>
</dbReference>
<dbReference type="InterPro" id="IPR019734">
    <property type="entry name" value="TPR_rpt"/>
</dbReference>
<dbReference type="PANTHER" id="PTHR21581">
    <property type="entry name" value="D-ALANYL-D-ALANINE CARBOXYPEPTIDASE"/>
    <property type="match status" value="1"/>
</dbReference>
<dbReference type="PANTHER" id="PTHR21581:SF6">
    <property type="entry name" value="TRAFFICKING PROTEIN PARTICLE COMPLEX SUBUNIT 12"/>
    <property type="match status" value="1"/>
</dbReference>
<dbReference type="Pfam" id="PF14559">
    <property type="entry name" value="TPR_19"/>
    <property type="match status" value="1"/>
</dbReference>
<dbReference type="Pfam" id="PF13174">
    <property type="entry name" value="TPR_6"/>
    <property type="match status" value="1"/>
</dbReference>
<dbReference type="SMART" id="SM00028">
    <property type="entry name" value="TPR"/>
    <property type="match status" value="4"/>
</dbReference>
<dbReference type="SUPFAM" id="SSF48452">
    <property type="entry name" value="TPR-like"/>
    <property type="match status" value="1"/>
</dbReference>
<dbReference type="PROSITE" id="PS50005">
    <property type="entry name" value="TPR"/>
    <property type="match status" value="4"/>
</dbReference>
<dbReference type="PROSITE" id="PS50293">
    <property type="entry name" value="TPR_REGION"/>
    <property type="match status" value="1"/>
</dbReference>
<evidence type="ECO:0000250" key="1">
    <source>
        <dbReference type="UniProtKB" id="Q8K2L8"/>
    </source>
</evidence>
<evidence type="ECO:0000256" key="2">
    <source>
        <dbReference type="SAM" id="MobiDB-lite"/>
    </source>
</evidence>
<evidence type="ECO:0000269" key="3">
    <source>
    </source>
</evidence>
<evidence type="ECO:0000269" key="4">
    <source>
    </source>
</evidence>
<evidence type="ECO:0000269" key="5">
    <source>
    </source>
</evidence>
<evidence type="ECO:0000269" key="6">
    <source>
    </source>
</evidence>
<evidence type="ECO:0000269" key="7">
    <source ref="2"/>
</evidence>
<evidence type="ECO:0000303" key="8">
    <source>
    </source>
</evidence>
<evidence type="ECO:0000303" key="9">
    <source>
    </source>
</evidence>
<evidence type="ECO:0000303" key="10">
    <source>
    </source>
</evidence>
<evidence type="ECO:0000305" key="11"/>
<evidence type="ECO:0000312" key="12">
    <source>
        <dbReference type="HGNC" id="HGNC:24284"/>
    </source>
</evidence>
<evidence type="ECO:0007744" key="13">
    <source>
    </source>
</evidence>
<evidence type="ECO:0007744" key="14">
    <source>
    </source>
</evidence>
<evidence type="ECO:0007744" key="15">
    <source>
    </source>
</evidence>
<evidence type="ECO:0007744" key="16">
    <source>
    </source>
</evidence>
<organism>
    <name type="scientific">Homo sapiens</name>
    <name type="common">Human</name>
    <dbReference type="NCBI Taxonomy" id="9606"/>
    <lineage>
        <taxon>Eukaryota</taxon>
        <taxon>Metazoa</taxon>
        <taxon>Chordata</taxon>
        <taxon>Craniata</taxon>
        <taxon>Vertebrata</taxon>
        <taxon>Euteleostomi</taxon>
        <taxon>Mammalia</taxon>
        <taxon>Eutheria</taxon>
        <taxon>Euarchontoglires</taxon>
        <taxon>Primates</taxon>
        <taxon>Haplorrhini</taxon>
        <taxon>Catarrhini</taxon>
        <taxon>Hominidae</taxon>
        <taxon>Homo</taxon>
    </lineage>
</organism>